<sequence>MTKPPLTLYLAAPRGFCAGVDRAIKIVELALDKWGAPVYVRHEIVHNKFVVDGLRAKGAIFVEELSECPDDRPVIFSAHGVPKSVPTAAQARNLVYVDATCPLVSKVHIEAQRHADNGLQMIMIGHAGHPETVGTMGQLPEGEVLLVETPEDVATVKVRDPAKLAYVTQTTLSVDDTADVVHALQQRFPLIVGPHKEDICYATTNRQEAVKAMAPKCDAMLVVGAPNSSNSRRLVEVGARAGCQYAQLVQRATDIDWRALDGISSIGITAGASAPEVLINEVIAAFDAHYDVTQEVVETAVENVEFKVPRVLREPA</sequence>
<proteinExistence type="inferred from homology"/>
<name>ISPH_ROSDO</name>
<accession>Q16AJ6</accession>
<organism>
    <name type="scientific">Roseobacter denitrificans (strain ATCC 33942 / OCh 114)</name>
    <name type="common">Erythrobacter sp. (strain OCh 114)</name>
    <name type="synonym">Roseobacter denitrificans</name>
    <dbReference type="NCBI Taxonomy" id="375451"/>
    <lineage>
        <taxon>Bacteria</taxon>
        <taxon>Pseudomonadati</taxon>
        <taxon>Pseudomonadota</taxon>
        <taxon>Alphaproteobacteria</taxon>
        <taxon>Rhodobacterales</taxon>
        <taxon>Roseobacteraceae</taxon>
        <taxon>Roseobacter</taxon>
    </lineage>
</organism>
<keyword id="KW-0004">4Fe-4S</keyword>
<keyword id="KW-0408">Iron</keyword>
<keyword id="KW-0411">Iron-sulfur</keyword>
<keyword id="KW-0414">Isoprene biosynthesis</keyword>
<keyword id="KW-0479">Metal-binding</keyword>
<keyword id="KW-0560">Oxidoreductase</keyword>
<keyword id="KW-1185">Reference proteome</keyword>
<evidence type="ECO:0000255" key="1">
    <source>
        <dbReference type="HAMAP-Rule" id="MF_00191"/>
    </source>
</evidence>
<dbReference type="EC" id="1.17.7.4" evidence="1"/>
<dbReference type="EMBL" id="CP000362">
    <property type="protein sequence ID" value="ABG30997.1"/>
    <property type="molecule type" value="Genomic_DNA"/>
</dbReference>
<dbReference type="RefSeq" id="WP_011567617.1">
    <property type="nucleotide sequence ID" value="NC_008209.1"/>
</dbReference>
<dbReference type="SMR" id="Q16AJ6"/>
<dbReference type="STRING" id="375451.RD1_1355"/>
<dbReference type="KEGG" id="rde:RD1_1355"/>
<dbReference type="eggNOG" id="COG0761">
    <property type="taxonomic scope" value="Bacteria"/>
</dbReference>
<dbReference type="HOGENOM" id="CLU_027486_1_0_5"/>
<dbReference type="OrthoDB" id="9804068at2"/>
<dbReference type="UniPathway" id="UPA00056">
    <property type="reaction ID" value="UER00097"/>
</dbReference>
<dbReference type="UniPathway" id="UPA00059">
    <property type="reaction ID" value="UER00105"/>
</dbReference>
<dbReference type="Proteomes" id="UP000007029">
    <property type="component" value="Chromosome"/>
</dbReference>
<dbReference type="GO" id="GO:0051539">
    <property type="term" value="F:4 iron, 4 sulfur cluster binding"/>
    <property type="evidence" value="ECO:0007669"/>
    <property type="project" value="UniProtKB-UniRule"/>
</dbReference>
<dbReference type="GO" id="GO:0051745">
    <property type="term" value="F:4-hydroxy-3-methylbut-2-enyl diphosphate reductase activity"/>
    <property type="evidence" value="ECO:0007669"/>
    <property type="project" value="UniProtKB-UniRule"/>
</dbReference>
<dbReference type="GO" id="GO:0046872">
    <property type="term" value="F:metal ion binding"/>
    <property type="evidence" value="ECO:0007669"/>
    <property type="project" value="UniProtKB-KW"/>
</dbReference>
<dbReference type="GO" id="GO:0050992">
    <property type="term" value="P:dimethylallyl diphosphate biosynthetic process"/>
    <property type="evidence" value="ECO:0007669"/>
    <property type="project" value="UniProtKB-UniRule"/>
</dbReference>
<dbReference type="GO" id="GO:0019288">
    <property type="term" value="P:isopentenyl diphosphate biosynthetic process, methylerythritol 4-phosphate pathway"/>
    <property type="evidence" value="ECO:0007669"/>
    <property type="project" value="UniProtKB-UniRule"/>
</dbReference>
<dbReference type="GO" id="GO:0016114">
    <property type="term" value="P:terpenoid biosynthetic process"/>
    <property type="evidence" value="ECO:0007669"/>
    <property type="project" value="UniProtKB-UniRule"/>
</dbReference>
<dbReference type="CDD" id="cd13944">
    <property type="entry name" value="lytB_ispH"/>
    <property type="match status" value="1"/>
</dbReference>
<dbReference type="Gene3D" id="3.40.50.11270">
    <property type="match status" value="1"/>
</dbReference>
<dbReference type="Gene3D" id="3.40.1010.20">
    <property type="entry name" value="4-hydroxy-3-methylbut-2-enyl diphosphate reductase, catalytic domain"/>
    <property type="match status" value="2"/>
</dbReference>
<dbReference type="HAMAP" id="MF_00191">
    <property type="entry name" value="IspH"/>
    <property type="match status" value="1"/>
</dbReference>
<dbReference type="InterPro" id="IPR003451">
    <property type="entry name" value="LytB/IspH"/>
</dbReference>
<dbReference type="NCBIfam" id="TIGR00216">
    <property type="entry name" value="ispH_lytB"/>
    <property type="match status" value="1"/>
</dbReference>
<dbReference type="NCBIfam" id="NF002188">
    <property type="entry name" value="PRK01045.1-2"/>
    <property type="match status" value="1"/>
</dbReference>
<dbReference type="NCBIfam" id="NF002190">
    <property type="entry name" value="PRK01045.1-4"/>
    <property type="match status" value="1"/>
</dbReference>
<dbReference type="PANTHER" id="PTHR30426">
    <property type="entry name" value="4-HYDROXY-3-METHYLBUT-2-ENYL DIPHOSPHATE REDUCTASE"/>
    <property type="match status" value="1"/>
</dbReference>
<dbReference type="PANTHER" id="PTHR30426:SF0">
    <property type="entry name" value="4-HYDROXY-3-METHYLBUT-2-ENYL DIPHOSPHATE REDUCTASE"/>
    <property type="match status" value="1"/>
</dbReference>
<dbReference type="Pfam" id="PF02401">
    <property type="entry name" value="LYTB"/>
    <property type="match status" value="1"/>
</dbReference>
<gene>
    <name evidence="1" type="primary">ispH</name>
    <name type="ordered locus">RD1_1355</name>
</gene>
<protein>
    <recommendedName>
        <fullName evidence="1">4-hydroxy-3-methylbut-2-enyl diphosphate reductase</fullName>
        <shortName evidence="1">HMBPP reductase</shortName>
        <ecNumber evidence="1">1.17.7.4</ecNumber>
    </recommendedName>
</protein>
<reference key="1">
    <citation type="journal article" date="2007" name="J. Bacteriol.">
        <title>The complete genome sequence of Roseobacter denitrificans reveals a mixotrophic rather than photosynthetic metabolism.</title>
        <authorList>
            <person name="Swingley W.D."/>
            <person name="Sadekar S."/>
            <person name="Mastrian S.D."/>
            <person name="Matthies H.J."/>
            <person name="Hao J."/>
            <person name="Ramos H."/>
            <person name="Acharya C.R."/>
            <person name="Conrad A.L."/>
            <person name="Taylor H.L."/>
            <person name="Dejesa L.C."/>
            <person name="Shah M.K."/>
            <person name="O'Huallachain M.E."/>
            <person name="Lince M.T."/>
            <person name="Blankenship R.E."/>
            <person name="Beatty J.T."/>
            <person name="Touchman J.W."/>
        </authorList>
    </citation>
    <scope>NUCLEOTIDE SEQUENCE [LARGE SCALE GENOMIC DNA]</scope>
    <source>
        <strain>ATCC 33942 / OCh 114</strain>
    </source>
</reference>
<feature type="chain" id="PRO_1000021174" description="4-hydroxy-3-methylbut-2-enyl diphosphate reductase">
    <location>
        <begin position="1"/>
        <end position="316"/>
    </location>
</feature>
<feature type="active site" description="Proton donor" evidence="1">
    <location>
        <position position="131"/>
    </location>
</feature>
<feature type="binding site" evidence="1">
    <location>
        <position position="17"/>
    </location>
    <ligand>
        <name>[4Fe-4S] cluster</name>
        <dbReference type="ChEBI" id="CHEBI:49883"/>
    </ligand>
</feature>
<feature type="binding site" evidence="1">
    <location>
        <position position="46"/>
    </location>
    <ligand>
        <name>(2E)-4-hydroxy-3-methylbut-2-enyl diphosphate</name>
        <dbReference type="ChEBI" id="CHEBI:128753"/>
    </ligand>
</feature>
<feature type="binding site" evidence="1">
    <location>
        <position position="46"/>
    </location>
    <ligand>
        <name>dimethylallyl diphosphate</name>
        <dbReference type="ChEBI" id="CHEBI:57623"/>
    </ligand>
</feature>
<feature type="binding site" evidence="1">
    <location>
        <position position="46"/>
    </location>
    <ligand>
        <name>isopentenyl diphosphate</name>
        <dbReference type="ChEBI" id="CHEBI:128769"/>
    </ligand>
</feature>
<feature type="binding site" evidence="1">
    <location>
        <position position="79"/>
    </location>
    <ligand>
        <name>(2E)-4-hydroxy-3-methylbut-2-enyl diphosphate</name>
        <dbReference type="ChEBI" id="CHEBI:128753"/>
    </ligand>
</feature>
<feature type="binding site" evidence="1">
    <location>
        <position position="79"/>
    </location>
    <ligand>
        <name>dimethylallyl diphosphate</name>
        <dbReference type="ChEBI" id="CHEBI:57623"/>
    </ligand>
</feature>
<feature type="binding site" evidence="1">
    <location>
        <position position="79"/>
    </location>
    <ligand>
        <name>isopentenyl diphosphate</name>
        <dbReference type="ChEBI" id="CHEBI:128769"/>
    </ligand>
</feature>
<feature type="binding site" evidence="1">
    <location>
        <position position="101"/>
    </location>
    <ligand>
        <name>[4Fe-4S] cluster</name>
        <dbReference type="ChEBI" id="CHEBI:49883"/>
    </ligand>
</feature>
<feature type="binding site" evidence="1">
    <location>
        <position position="129"/>
    </location>
    <ligand>
        <name>(2E)-4-hydroxy-3-methylbut-2-enyl diphosphate</name>
        <dbReference type="ChEBI" id="CHEBI:128753"/>
    </ligand>
</feature>
<feature type="binding site" evidence="1">
    <location>
        <position position="129"/>
    </location>
    <ligand>
        <name>dimethylallyl diphosphate</name>
        <dbReference type="ChEBI" id="CHEBI:57623"/>
    </ligand>
</feature>
<feature type="binding site" evidence="1">
    <location>
        <position position="129"/>
    </location>
    <ligand>
        <name>isopentenyl diphosphate</name>
        <dbReference type="ChEBI" id="CHEBI:128769"/>
    </ligand>
</feature>
<feature type="binding site" evidence="1">
    <location>
        <position position="170"/>
    </location>
    <ligand>
        <name>(2E)-4-hydroxy-3-methylbut-2-enyl diphosphate</name>
        <dbReference type="ChEBI" id="CHEBI:128753"/>
    </ligand>
</feature>
<feature type="binding site" evidence="1">
    <location>
        <position position="200"/>
    </location>
    <ligand>
        <name>[4Fe-4S] cluster</name>
        <dbReference type="ChEBI" id="CHEBI:49883"/>
    </ligand>
</feature>
<feature type="binding site" evidence="1">
    <location>
        <position position="228"/>
    </location>
    <ligand>
        <name>(2E)-4-hydroxy-3-methylbut-2-enyl diphosphate</name>
        <dbReference type="ChEBI" id="CHEBI:128753"/>
    </ligand>
</feature>
<feature type="binding site" evidence="1">
    <location>
        <position position="228"/>
    </location>
    <ligand>
        <name>dimethylallyl diphosphate</name>
        <dbReference type="ChEBI" id="CHEBI:57623"/>
    </ligand>
</feature>
<feature type="binding site" evidence="1">
    <location>
        <position position="228"/>
    </location>
    <ligand>
        <name>isopentenyl diphosphate</name>
        <dbReference type="ChEBI" id="CHEBI:128769"/>
    </ligand>
</feature>
<feature type="binding site" evidence="1">
    <location>
        <position position="229"/>
    </location>
    <ligand>
        <name>(2E)-4-hydroxy-3-methylbut-2-enyl diphosphate</name>
        <dbReference type="ChEBI" id="CHEBI:128753"/>
    </ligand>
</feature>
<feature type="binding site" evidence="1">
    <location>
        <position position="229"/>
    </location>
    <ligand>
        <name>dimethylallyl diphosphate</name>
        <dbReference type="ChEBI" id="CHEBI:57623"/>
    </ligand>
</feature>
<feature type="binding site" evidence="1">
    <location>
        <position position="229"/>
    </location>
    <ligand>
        <name>isopentenyl diphosphate</name>
        <dbReference type="ChEBI" id="CHEBI:128769"/>
    </ligand>
</feature>
<feature type="binding site" evidence="1">
    <location>
        <position position="230"/>
    </location>
    <ligand>
        <name>(2E)-4-hydroxy-3-methylbut-2-enyl diphosphate</name>
        <dbReference type="ChEBI" id="CHEBI:128753"/>
    </ligand>
</feature>
<feature type="binding site" evidence="1">
    <location>
        <position position="230"/>
    </location>
    <ligand>
        <name>dimethylallyl diphosphate</name>
        <dbReference type="ChEBI" id="CHEBI:57623"/>
    </ligand>
</feature>
<feature type="binding site" evidence="1">
    <location>
        <position position="230"/>
    </location>
    <ligand>
        <name>isopentenyl diphosphate</name>
        <dbReference type="ChEBI" id="CHEBI:128769"/>
    </ligand>
</feature>
<feature type="binding site" evidence="1">
    <location>
        <position position="273"/>
    </location>
    <ligand>
        <name>(2E)-4-hydroxy-3-methylbut-2-enyl diphosphate</name>
        <dbReference type="ChEBI" id="CHEBI:128753"/>
    </ligand>
</feature>
<feature type="binding site" evidence="1">
    <location>
        <position position="273"/>
    </location>
    <ligand>
        <name>dimethylallyl diphosphate</name>
        <dbReference type="ChEBI" id="CHEBI:57623"/>
    </ligand>
</feature>
<feature type="binding site" evidence="1">
    <location>
        <position position="273"/>
    </location>
    <ligand>
        <name>isopentenyl diphosphate</name>
        <dbReference type="ChEBI" id="CHEBI:128769"/>
    </ligand>
</feature>
<comment type="function">
    <text evidence="1">Catalyzes the conversion of 1-hydroxy-2-methyl-2-(E)-butenyl 4-diphosphate (HMBPP) into a mixture of isopentenyl diphosphate (IPP) and dimethylallyl diphosphate (DMAPP). Acts in the terminal step of the DOXP/MEP pathway for isoprenoid precursor biosynthesis.</text>
</comment>
<comment type="catalytic activity">
    <reaction evidence="1">
        <text>isopentenyl diphosphate + 2 oxidized [2Fe-2S]-[ferredoxin] + H2O = (2E)-4-hydroxy-3-methylbut-2-enyl diphosphate + 2 reduced [2Fe-2S]-[ferredoxin] + 2 H(+)</text>
        <dbReference type="Rhea" id="RHEA:24488"/>
        <dbReference type="Rhea" id="RHEA-COMP:10000"/>
        <dbReference type="Rhea" id="RHEA-COMP:10001"/>
        <dbReference type="ChEBI" id="CHEBI:15377"/>
        <dbReference type="ChEBI" id="CHEBI:15378"/>
        <dbReference type="ChEBI" id="CHEBI:33737"/>
        <dbReference type="ChEBI" id="CHEBI:33738"/>
        <dbReference type="ChEBI" id="CHEBI:128753"/>
        <dbReference type="ChEBI" id="CHEBI:128769"/>
        <dbReference type="EC" id="1.17.7.4"/>
    </reaction>
</comment>
<comment type="catalytic activity">
    <reaction evidence="1">
        <text>dimethylallyl diphosphate + 2 oxidized [2Fe-2S]-[ferredoxin] + H2O = (2E)-4-hydroxy-3-methylbut-2-enyl diphosphate + 2 reduced [2Fe-2S]-[ferredoxin] + 2 H(+)</text>
        <dbReference type="Rhea" id="RHEA:24825"/>
        <dbReference type="Rhea" id="RHEA-COMP:10000"/>
        <dbReference type="Rhea" id="RHEA-COMP:10001"/>
        <dbReference type="ChEBI" id="CHEBI:15377"/>
        <dbReference type="ChEBI" id="CHEBI:15378"/>
        <dbReference type="ChEBI" id="CHEBI:33737"/>
        <dbReference type="ChEBI" id="CHEBI:33738"/>
        <dbReference type="ChEBI" id="CHEBI:57623"/>
        <dbReference type="ChEBI" id="CHEBI:128753"/>
        <dbReference type="EC" id="1.17.7.4"/>
    </reaction>
</comment>
<comment type="cofactor">
    <cofactor evidence="1">
        <name>[4Fe-4S] cluster</name>
        <dbReference type="ChEBI" id="CHEBI:49883"/>
    </cofactor>
    <text evidence="1">Binds 1 [4Fe-4S] cluster per subunit.</text>
</comment>
<comment type="pathway">
    <text evidence="1">Isoprenoid biosynthesis; dimethylallyl diphosphate biosynthesis; dimethylallyl diphosphate from (2E)-4-hydroxy-3-methylbutenyl diphosphate: step 1/1.</text>
</comment>
<comment type="pathway">
    <text evidence="1">Isoprenoid biosynthesis; isopentenyl diphosphate biosynthesis via DXP pathway; isopentenyl diphosphate from 1-deoxy-D-xylulose 5-phosphate: step 6/6.</text>
</comment>
<comment type="similarity">
    <text evidence="1">Belongs to the IspH family.</text>
</comment>